<protein>
    <recommendedName>
        <fullName>Phosphocarrier protein HPr</fullName>
    </recommendedName>
    <alternativeName>
        <fullName>Histidine-containing protein</fullName>
    </alternativeName>
</protein>
<name>PTHP_STAAM</name>
<accession>P0A0E1</accession>
<accession>P02907</accession>
<gene>
    <name type="primary">ptsH</name>
    <name type="ordered locus">SAV1083</name>
</gene>
<comment type="function">
    <text evidence="1">General (non sugar-specific) component of the phosphoenolpyruvate-dependent sugar phosphotransferase system (sugar PTS). This major carbohydrate active-transport system catalyzes the phosphorylation of incoming sugar substrates concomitantly with their translocation across the cell membrane. The phosphoryl group from phosphoenolpyruvate (PEP) is transferred to the phosphoryl carrier protein HPr by enzyme I. Phospho-HPr then transfers it to the PTS EIIA domain.</text>
</comment>
<comment type="function">
    <text evidence="1">P-Ser-HPr interacts with the catabolite control protein A (CcpA), forming a complex that binds to DNA at the catabolite response elements cre, operator sites preceding a large number of catabolite-regulated genes. Thus, P-Ser-HPr is a corepressor in carbon catabolite repression (CCR), a mechanism that allows bacteria to coordinate and optimize the utilization of available carbon sources. P-Ser-HPr also plays a role in inducer exclusion, in which it probably interacts with several non-PTS permeases and inhibits their transport activity (By similarity).</text>
</comment>
<comment type="activity regulation">
    <text evidence="1">Phosphorylation on Ser-46 inhibits the phosphoryl transfer from enzyme I to HPr.</text>
</comment>
<comment type="subcellular location">
    <subcellularLocation>
        <location evidence="1">Cytoplasm</location>
    </subcellularLocation>
</comment>
<comment type="similarity">
    <text evidence="3">Belongs to the HPr family.</text>
</comment>
<evidence type="ECO:0000250" key="1"/>
<evidence type="ECO:0000255" key="2">
    <source>
        <dbReference type="PROSITE-ProRule" id="PRU00681"/>
    </source>
</evidence>
<evidence type="ECO:0000305" key="3"/>
<sequence length="88" mass="9496">MEQNSYVIIDETGIHARPATMLVQTASKFDSDIQLEYNGKKVNLKSIMGVMSLGVGKDAEITIYADGSDESDAIQAISDVLSKEGLTK</sequence>
<feature type="chain" id="PRO_0000107873" description="Phosphocarrier protein HPr">
    <location>
        <begin position="1"/>
        <end position="88"/>
    </location>
</feature>
<feature type="domain" description="HPr" evidence="2">
    <location>
        <begin position="1"/>
        <end position="88"/>
    </location>
</feature>
<feature type="active site" description="Pros-phosphohistidine intermediate" evidence="2">
    <location>
        <position position="15"/>
    </location>
</feature>
<feature type="modified residue" description="Phosphoserine; by HPrK/P" evidence="2">
    <location>
        <position position="46"/>
    </location>
</feature>
<proteinExistence type="inferred from homology"/>
<keyword id="KW-0963">Cytoplasm</keyword>
<keyword id="KW-0597">Phosphoprotein</keyword>
<keyword id="KW-0598">Phosphotransferase system</keyword>
<keyword id="KW-0762">Sugar transport</keyword>
<keyword id="KW-0804">Transcription</keyword>
<keyword id="KW-0805">Transcription regulation</keyword>
<keyword id="KW-0813">Transport</keyword>
<dbReference type="EMBL" id="BA000017">
    <property type="protein sequence ID" value="BAB57245.1"/>
    <property type="molecule type" value="Genomic_DNA"/>
</dbReference>
<dbReference type="RefSeq" id="WP_000437472.1">
    <property type="nucleotide sequence ID" value="NC_002758.2"/>
</dbReference>
<dbReference type="BMRB" id="P0A0E1"/>
<dbReference type="SMR" id="P0A0E1"/>
<dbReference type="KEGG" id="sav:SAV1083"/>
<dbReference type="HOGENOM" id="CLU_136230_2_2_9"/>
<dbReference type="PhylomeDB" id="P0A0E1"/>
<dbReference type="Proteomes" id="UP000002481">
    <property type="component" value="Chromosome"/>
</dbReference>
<dbReference type="GO" id="GO:0005737">
    <property type="term" value="C:cytoplasm"/>
    <property type="evidence" value="ECO:0007669"/>
    <property type="project" value="UniProtKB-SubCell"/>
</dbReference>
<dbReference type="GO" id="GO:0009401">
    <property type="term" value="P:phosphoenolpyruvate-dependent sugar phosphotransferase system"/>
    <property type="evidence" value="ECO:0007669"/>
    <property type="project" value="UniProtKB-KW"/>
</dbReference>
<dbReference type="CDD" id="cd00367">
    <property type="entry name" value="PTS-HPr_like"/>
    <property type="match status" value="1"/>
</dbReference>
<dbReference type="Gene3D" id="3.30.1340.10">
    <property type="entry name" value="HPr-like"/>
    <property type="match status" value="1"/>
</dbReference>
<dbReference type="InterPro" id="IPR050399">
    <property type="entry name" value="HPr"/>
</dbReference>
<dbReference type="InterPro" id="IPR000032">
    <property type="entry name" value="HPr-like"/>
</dbReference>
<dbReference type="InterPro" id="IPR035895">
    <property type="entry name" value="HPr-like_sf"/>
</dbReference>
<dbReference type="InterPro" id="IPR001020">
    <property type="entry name" value="PTS_HPr_His_P_site"/>
</dbReference>
<dbReference type="InterPro" id="IPR002114">
    <property type="entry name" value="PTS_HPr_Ser_P_site"/>
</dbReference>
<dbReference type="NCBIfam" id="NF010352">
    <property type="entry name" value="PRK13780.1"/>
    <property type="match status" value="1"/>
</dbReference>
<dbReference type="NCBIfam" id="TIGR01003">
    <property type="entry name" value="PTS_HPr_family"/>
    <property type="match status" value="1"/>
</dbReference>
<dbReference type="PANTHER" id="PTHR33705">
    <property type="entry name" value="PHOSPHOCARRIER PROTEIN HPR"/>
    <property type="match status" value="1"/>
</dbReference>
<dbReference type="PANTHER" id="PTHR33705:SF2">
    <property type="entry name" value="PHOSPHOCARRIER PROTEIN NPR"/>
    <property type="match status" value="1"/>
</dbReference>
<dbReference type="Pfam" id="PF00381">
    <property type="entry name" value="PTS-HPr"/>
    <property type="match status" value="1"/>
</dbReference>
<dbReference type="PRINTS" id="PR00107">
    <property type="entry name" value="PHOSPHOCPHPR"/>
</dbReference>
<dbReference type="SUPFAM" id="SSF55594">
    <property type="entry name" value="HPr-like"/>
    <property type="match status" value="1"/>
</dbReference>
<dbReference type="PROSITE" id="PS51350">
    <property type="entry name" value="PTS_HPR_DOM"/>
    <property type="match status" value="1"/>
</dbReference>
<dbReference type="PROSITE" id="PS00369">
    <property type="entry name" value="PTS_HPR_HIS"/>
    <property type="match status" value="1"/>
</dbReference>
<dbReference type="PROSITE" id="PS00589">
    <property type="entry name" value="PTS_HPR_SER"/>
    <property type="match status" value="1"/>
</dbReference>
<organism>
    <name type="scientific">Staphylococcus aureus (strain Mu50 / ATCC 700699)</name>
    <dbReference type="NCBI Taxonomy" id="158878"/>
    <lineage>
        <taxon>Bacteria</taxon>
        <taxon>Bacillati</taxon>
        <taxon>Bacillota</taxon>
        <taxon>Bacilli</taxon>
        <taxon>Bacillales</taxon>
        <taxon>Staphylococcaceae</taxon>
        <taxon>Staphylococcus</taxon>
    </lineage>
</organism>
<reference key="1">
    <citation type="journal article" date="2001" name="Lancet">
        <title>Whole genome sequencing of meticillin-resistant Staphylococcus aureus.</title>
        <authorList>
            <person name="Kuroda M."/>
            <person name="Ohta T."/>
            <person name="Uchiyama I."/>
            <person name="Baba T."/>
            <person name="Yuzawa H."/>
            <person name="Kobayashi I."/>
            <person name="Cui L."/>
            <person name="Oguchi A."/>
            <person name="Aoki K."/>
            <person name="Nagai Y."/>
            <person name="Lian J.-Q."/>
            <person name="Ito T."/>
            <person name="Kanamori M."/>
            <person name="Matsumaru H."/>
            <person name="Maruyama A."/>
            <person name="Murakami H."/>
            <person name="Hosoyama A."/>
            <person name="Mizutani-Ui Y."/>
            <person name="Takahashi N.K."/>
            <person name="Sawano T."/>
            <person name="Inoue R."/>
            <person name="Kaito C."/>
            <person name="Sekimizu K."/>
            <person name="Hirakawa H."/>
            <person name="Kuhara S."/>
            <person name="Goto S."/>
            <person name="Yabuzaki J."/>
            <person name="Kanehisa M."/>
            <person name="Yamashita A."/>
            <person name="Oshima K."/>
            <person name="Furuya K."/>
            <person name="Yoshino C."/>
            <person name="Shiba T."/>
            <person name="Hattori M."/>
            <person name="Ogasawara N."/>
            <person name="Hayashi H."/>
            <person name="Hiramatsu K."/>
        </authorList>
    </citation>
    <scope>NUCLEOTIDE SEQUENCE [LARGE SCALE GENOMIC DNA]</scope>
    <source>
        <strain>Mu50 / ATCC 700699</strain>
    </source>
</reference>